<reference key="1">
    <citation type="journal article" date="2004" name="Science">
        <title>The complete genome sequence of Propionibacterium acnes, a commensal of human skin.</title>
        <authorList>
            <person name="Brueggemann H."/>
            <person name="Henne A."/>
            <person name="Hoster F."/>
            <person name="Liesegang H."/>
            <person name="Wiezer A."/>
            <person name="Strittmatter A."/>
            <person name="Hujer S."/>
            <person name="Duerre P."/>
            <person name="Gottschalk G."/>
        </authorList>
    </citation>
    <scope>NUCLEOTIDE SEQUENCE [LARGE SCALE GENOMIC DNA]</scope>
    <source>
        <strain>DSM 16379 / KPA171202</strain>
    </source>
</reference>
<organism>
    <name type="scientific">Cutibacterium acnes (strain DSM 16379 / KPA171202)</name>
    <name type="common">Propionibacterium acnes</name>
    <dbReference type="NCBI Taxonomy" id="267747"/>
    <lineage>
        <taxon>Bacteria</taxon>
        <taxon>Bacillati</taxon>
        <taxon>Actinomycetota</taxon>
        <taxon>Actinomycetes</taxon>
        <taxon>Propionibacteriales</taxon>
        <taxon>Propionibacteriaceae</taxon>
        <taxon>Cutibacterium</taxon>
    </lineage>
</organism>
<feature type="chain" id="PRO_0000126235" description="Large ribosomal subunit protein bL36">
    <location>
        <begin position="1"/>
        <end position="37"/>
    </location>
</feature>
<feature type="strand" evidence="3">
    <location>
        <begin position="11"/>
        <end position="13"/>
    </location>
</feature>
<feature type="strand" evidence="3">
    <location>
        <begin position="15"/>
        <end position="19"/>
    </location>
</feature>
<feature type="strand" evidence="3">
    <location>
        <begin position="22"/>
        <end position="26"/>
    </location>
</feature>
<feature type="helix" evidence="3">
    <location>
        <begin position="30"/>
        <end position="32"/>
    </location>
</feature>
<gene>
    <name evidence="1" type="primary">rpmJ</name>
    <name type="ordered locus">PPA1831</name>
</gene>
<accession>Q6A6Q7</accession>
<sequence>MKVQPSVKKICDKCKVIRRHGRVMVICDNPRHKQRQG</sequence>
<name>RL36_CUTAK</name>
<keyword id="KW-0002">3D-structure</keyword>
<keyword id="KW-0687">Ribonucleoprotein</keyword>
<keyword id="KW-0689">Ribosomal protein</keyword>
<evidence type="ECO:0000255" key="1">
    <source>
        <dbReference type="HAMAP-Rule" id="MF_00251"/>
    </source>
</evidence>
<evidence type="ECO:0000305" key="2"/>
<evidence type="ECO:0007829" key="3">
    <source>
        <dbReference type="PDB" id="8CVM"/>
    </source>
</evidence>
<proteinExistence type="evidence at protein level"/>
<comment type="similarity">
    <text evidence="1">Belongs to the bacterial ribosomal protein bL36 family.</text>
</comment>
<dbReference type="EMBL" id="AE017283">
    <property type="protein sequence ID" value="AAT83556.1"/>
    <property type="molecule type" value="Genomic_DNA"/>
</dbReference>
<dbReference type="RefSeq" id="WP_002514836.1">
    <property type="nucleotide sequence ID" value="NZ_CP025935.1"/>
</dbReference>
<dbReference type="PDB" id="8CRX">
    <property type="method" value="EM"/>
    <property type="resolution" value="2.78 A"/>
    <property type="chains" value="3=1-37"/>
</dbReference>
<dbReference type="PDB" id="8CVM">
    <property type="method" value="EM"/>
    <property type="resolution" value="2.66 A"/>
    <property type="chains" value="3=1-37"/>
</dbReference>
<dbReference type="PDBsum" id="8CRX"/>
<dbReference type="PDBsum" id="8CVM"/>
<dbReference type="SMR" id="Q6A6Q7"/>
<dbReference type="EnsemblBacteria" id="AAT83556">
    <property type="protein sequence ID" value="AAT83556"/>
    <property type="gene ID" value="PPA1831"/>
</dbReference>
<dbReference type="GeneID" id="92881183"/>
<dbReference type="KEGG" id="pac:PPA1831"/>
<dbReference type="eggNOG" id="COG0257">
    <property type="taxonomic scope" value="Bacteria"/>
</dbReference>
<dbReference type="HOGENOM" id="CLU_135723_6_2_11"/>
<dbReference type="Proteomes" id="UP000000603">
    <property type="component" value="Chromosome"/>
</dbReference>
<dbReference type="GO" id="GO:0005737">
    <property type="term" value="C:cytoplasm"/>
    <property type="evidence" value="ECO:0007669"/>
    <property type="project" value="UniProtKB-ARBA"/>
</dbReference>
<dbReference type="GO" id="GO:1990904">
    <property type="term" value="C:ribonucleoprotein complex"/>
    <property type="evidence" value="ECO:0007669"/>
    <property type="project" value="UniProtKB-KW"/>
</dbReference>
<dbReference type="GO" id="GO:0005840">
    <property type="term" value="C:ribosome"/>
    <property type="evidence" value="ECO:0007669"/>
    <property type="project" value="UniProtKB-KW"/>
</dbReference>
<dbReference type="GO" id="GO:0003735">
    <property type="term" value="F:structural constituent of ribosome"/>
    <property type="evidence" value="ECO:0007669"/>
    <property type="project" value="InterPro"/>
</dbReference>
<dbReference type="GO" id="GO:0006412">
    <property type="term" value="P:translation"/>
    <property type="evidence" value="ECO:0007669"/>
    <property type="project" value="UniProtKB-UniRule"/>
</dbReference>
<dbReference type="HAMAP" id="MF_00251">
    <property type="entry name" value="Ribosomal_bL36"/>
    <property type="match status" value="1"/>
</dbReference>
<dbReference type="InterPro" id="IPR000473">
    <property type="entry name" value="Ribosomal_bL36"/>
</dbReference>
<dbReference type="InterPro" id="IPR035977">
    <property type="entry name" value="Ribosomal_bL36_sp"/>
</dbReference>
<dbReference type="NCBIfam" id="TIGR01022">
    <property type="entry name" value="rpmJ_bact"/>
    <property type="match status" value="1"/>
</dbReference>
<dbReference type="PANTHER" id="PTHR42888">
    <property type="entry name" value="50S RIBOSOMAL PROTEIN L36, CHLOROPLASTIC"/>
    <property type="match status" value="1"/>
</dbReference>
<dbReference type="PANTHER" id="PTHR42888:SF1">
    <property type="entry name" value="LARGE RIBOSOMAL SUBUNIT PROTEIN BL36C"/>
    <property type="match status" value="1"/>
</dbReference>
<dbReference type="Pfam" id="PF00444">
    <property type="entry name" value="Ribosomal_L36"/>
    <property type="match status" value="1"/>
</dbReference>
<dbReference type="SUPFAM" id="SSF57840">
    <property type="entry name" value="Ribosomal protein L36"/>
    <property type="match status" value="1"/>
</dbReference>
<dbReference type="PROSITE" id="PS00828">
    <property type="entry name" value="RIBOSOMAL_L36"/>
    <property type="match status" value="1"/>
</dbReference>
<protein>
    <recommendedName>
        <fullName evidence="1">Large ribosomal subunit protein bL36</fullName>
    </recommendedName>
    <alternativeName>
        <fullName evidence="2">50S ribosomal protein L36</fullName>
    </alternativeName>
</protein>